<gene>
    <name evidence="1" type="primary">murD</name>
    <name type="ordered locus">CGSHiEE_06370</name>
</gene>
<sequence>MNAYQNKNITIIGLGKTGLSCVDYLLSQQANIRVIDTRKKPTGIDKLPQNIPLHTGSLNQEWLLESDMIVISPGLAVKTPEIQTALKAGVEVIGDIELFCRAATKPIVGITGSNGKSTVTTLVYEMAKAAGVKVGMGGNIGIPALSLLNEDCELYVLELSSFQLETTYSLKAAAATVLNVTEDHMDRYMDLEDYRQAKLRIYHNAEVGVLNNEDKLTFGEGENQARQTVSFAENSADYWLKTENGKQYLMVKDEVILPCEEATLVGRHNYMNILAATALAQAVGINLDAIRTALRHFKGLDHRFQLAHQANGVRWINDSKATNVGSTVAALSGLYVEGKLHLLLGGDGKGADFSELAELINQPHIICYCFGRDGALLAKLSSQSYLFETMEQAIAFLRPTLQSGDMVLLSPACASLDQFASFEKRGEEFTRLAQCLA</sequence>
<proteinExistence type="inferred from homology"/>
<organism>
    <name type="scientific">Haemophilus influenzae (strain PittEE)</name>
    <dbReference type="NCBI Taxonomy" id="374930"/>
    <lineage>
        <taxon>Bacteria</taxon>
        <taxon>Pseudomonadati</taxon>
        <taxon>Pseudomonadota</taxon>
        <taxon>Gammaproteobacteria</taxon>
        <taxon>Pasteurellales</taxon>
        <taxon>Pasteurellaceae</taxon>
        <taxon>Haemophilus</taxon>
    </lineage>
</organism>
<protein>
    <recommendedName>
        <fullName evidence="1">UDP-N-acetylmuramoylalanine--D-glutamate ligase</fullName>
        <ecNumber evidence="1">6.3.2.9</ecNumber>
    </recommendedName>
    <alternativeName>
        <fullName evidence="1">D-glutamic acid-adding enzyme</fullName>
    </alternativeName>
    <alternativeName>
        <fullName evidence="1">UDP-N-acetylmuramoyl-L-alanyl-D-glutamate synthetase</fullName>
    </alternativeName>
</protein>
<keyword id="KW-0067">ATP-binding</keyword>
<keyword id="KW-0131">Cell cycle</keyword>
<keyword id="KW-0132">Cell division</keyword>
<keyword id="KW-0133">Cell shape</keyword>
<keyword id="KW-0961">Cell wall biogenesis/degradation</keyword>
<keyword id="KW-0963">Cytoplasm</keyword>
<keyword id="KW-0436">Ligase</keyword>
<keyword id="KW-0547">Nucleotide-binding</keyword>
<keyword id="KW-0573">Peptidoglycan synthesis</keyword>
<reference key="1">
    <citation type="journal article" date="2007" name="Genome Biol.">
        <title>Characterization and modeling of the Haemophilus influenzae core and supragenomes based on the complete genomic sequences of Rd and 12 clinical nontypeable strains.</title>
        <authorList>
            <person name="Hogg J.S."/>
            <person name="Hu F.Z."/>
            <person name="Janto B."/>
            <person name="Boissy R."/>
            <person name="Hayes J."/>
            <person name="Keefe R."/>
            <person name="Post J.C."/>
            <person name="Ehrlich G.D."/>
        </authorList>
    </citation>
    <scope>NUCLEOTIDE SEQUENCE [LARGE SCALE GENOMIC DNA]</scope>
    <source>
        <strain>PittEE</strain>
    </source>
</reference>
<comment type="function">
    <text evidence="1">Cell wall formation. Catalyzes the addition of glutamate to the nucleotide precursor UDP-N-acetylmuramoyl-L-alanine (UMA).</text>
</comment>
<comment type="catalytic activity">
    <reaction evidence="1">
        <text>UDP-N-acetyl-alpha-D-muramoyl-L-alanine + D-glutamate + ATP = UDP-N-acetyl-alpha-D-muramoyl-L-alanyl-D-glutamate + ADP + phosphate + H(+)</text>
        <dbReference type="Rhea" id="RHEA:16429"/>
        <dbReference type="ChEBI" id="CHEBI:15378"/>
        <dbReference type="ChEBI" id="CHEBI:29986"/>
        <dbReference type="ChEBI" id="CHEBI:30616"/>
        <dbReference type="ChEBI" id="CHEBI:43474"/>
        <dbReference type="ChEBI" id="CHEBI:83898"/>
        <dbReference type="ChEBI" id="CHEBI:83900"/>
        <dbReference type="ChEBI" id="CHEBI:456216"/>
        <dbReference type="EC" id="6.3.2.9"/>
    </reaction>
</comment>
<comment type="pathway">
    <text evidence="1">Cell wall biogenesis; peptidoglycan biosynthesis.</text>
</comment>
<comment type="subcellular location">
    <subcellularLocation>
        <location evidence="1">Cytoplasm</location>
    </subcellularLocation>
</comment>
<comment type="similarity">
    <text evidence="1">Belongs to the MurCDEF family.</text>
</comment>
<accession>A5UCX0</accession>
<evidence type="ECO:0000255" key="1">
    <source>
        <dbReference type="HAMAP-Rule" id="MF_00639"/>
    </source>
</evidence>
<dbReference type="EC" id="6.3.2.9" evidence="1"/>
<dbReference type="EMBL" id="CP000671">
    <property type="protein sequence ID" value="ABQ98621.1"/>
    <property type="molecule type" value="Genomic_DNA"/>
</dbReference>
<dbReference type="SMR" id="A5UCX0"/>
<dbReference type="KEGG" id="hip:CGSHiEE_06370"/>
<dbReference type="HOGENOM" id="CLU_032540_1_0_6"/>
<dbReference type="UniPathway" id="UPA00219"/>
<dbReference type="GO" id="GO:0005737">
    <property type="term" value="C:cytoplasm"/>
    <property type="evidence" value="ECO:0007669"/>
    <property type="project" value="UniProtKB-SubCell"/>
</dbReference>
<dbReference type="GO" id="GO:0005524">
    <property type="term" value="F:ATP binding"/>
    <property type="evidence" value="ECO:0007669"/>
    <property type="project" value="UniProtKB-UniRule"/>
</dbReference>
<dbReference type="GO" id="GO:0008764">
    <property type="term" value="F:UDP-N-acetylmuramoylalanine-D-glutamate ligase activity"/>
    <property type="evidence" value="ECO:0007669"/>
    <property type="project" value="UniProtKB-UniRule"/>
</dbReference>
<dbReference type="GO" id="GO:0051301">
    <property type="term" value="P:cell division"/>
    <property type="evidence" value="ECO:0007669"/>
    <property type="project" value="UniProtKB-KW"/>
</dbReference>
<dbReference type="GO" id="GO:0071555">
    <property type="term" value="P:cell wall organization"/>
    <property type="evidence" value="ECO:0007669"/>
    <property type="project" value="UniProtKB-KW"/>
</dbReference>
<dbReference type="GO" id="GO:0009252">
    <property type="term" value="P:peptidoglycan biosynthetic process"/>
    <property type="evidence" value="ECO:0007669"/>
    <property type="project" value="UniProtKB-UniRule"/>
</dbReference>
<dbReference type="GO" id="GO:0008360">
    <property type="term" value="P:regulation of cell shape"/>
    <property type="evidence" value="ECO:0007669"/>
    <property type="project" value="UniProtKB-KW"/>
</dbReference>
<dbReference type="Gene3D" id="3.90.190.20">
    <property type="entry name" value="Mur ligase, C-terminal domain"/>
    <property type="match status" value="1"/>
</dbReference>
<dbReference type="Gene3D" id="3.40.1190.10">
    <property type="entry name" value="Mur-like, catalytic domain"/>
    <property type="match status" value="1"/>
</dbReference>
<dbReference type="Gene3D" id="3.40.50.720">
    <property type="entry name" value="NAD(P)-binding Rossmann-like Domain"/>
    <property type="match status" value="1"/>
</dbReference>
<dbReference type="HAMAP" id="MF_00639">
    <property type="entry name" value="MurD"/>
    <property type="match status" value="1"/>
</dbReference>
<dbReference type="InterPro" id="IPR036565">
    <property type="entry name" value="Mur-like_cat_sf"/>
</dbReference>
<dbReference type="InterPro" id="IPR004101">
    <property type="entry name" value="Mur_ligase_C"/>
</dbReference>
<dbReference type="InterPro" id="IPR036615">
    <property type="entry name" value="Mur_ligase_C_dom_sf"/>
</dbReference>
<dbReference type="InterPro" id="IPR013221">
    <property type="entry name" value="Mur_ligase_cen"/>
</dbReference>
<dbReference type="InterPro" id="IPR005762">
    <property type="entry name" value="MurD"/>
</dbReference>
<dbReference type="NCBIfam" id="TIGR01087">
    <property type="entry name" value="murD"/>
    <property type="match status" value="1"/>
</dbReference>
<dbReference type="PANTHER" id="PTHR43692">
    <property type="entry name" value="UDP-N-ACETYLMURAMOYLALANINE--D-GLUTAMATE LIGASE"/>
    <property type="match status" value="1"/>
</dbReference>
<dbReference type="PANTHER" id="PTHR43692:SF1">
    <property type="entry name" value="UDP-N-ACETYLMURAMOYLALANINE--D-GLUTAMATE LIGASE"/>
    <property type="match status" value="1"/>
</dbReference>
<dbReference type="Pfam" id="PF02875">
    <property type="entry name" value="Mur_ligase_C"/>
    <property type="match status" value="1"/>
</dbReference>
<dbReference type="Pfam" id="PF08245">
    <property type="entry name" value="Mur_ligase_M"/>
    <property type="match status" value="1"/>
</dbReference>
<dbReference type="Pfam" id="PF21799">
    <property type="entry name" value="MurD-like_N"/>
    <property type="match status" value="1"/>
</dbReference>
<dbReference type="SUPFAM" id="SSF51984">
    <property type="entry name" value="MurCD N-terminal domain"/>
    <property type="match status" value="1"/>
</dbReference>
<dbReference type="SUPFAM" id="SSF53623">
    <property type="entry name" value="MurD-like peptide ligases, catalytic domain"/>
    <property type="match status" value="1"/>
</dbReference>
<dbReference type="SUPFAM" id="SSF53244">
    <property type="entry name" value="MurD-like peptide ligases, peptide-binding domain"/>
    <property type="match status" value="1"/>
</dbReference>
<feature type="chain" id="PRO_1000056884" description="UDP-N-acetylmuramoylalanine--D-glutamate ligase">
    <location>
        <begin position="1"/>
        <end position="437"/>
    </location>
</feature>
<feature type="binding site" evidence="1">
    <location>
        <begin position="112"/>
        <end position="118"/>
    </location>
    <ligand>
        <name>ATP</name>
        <dbReference type="ChEBI" id="CHEBI:30616"/>
    </ligand>
</feature>
<name>MURD_HAEIE</name>